<organism>
    <name type="scientific">Bacillus subtilis (strain 168)</name>
    <dbReference type="NCBI Taxonomy" id="224308"/>
    <lineage>
        <taxon>Bacteria</taxon>
        <taxon>Bacillati</taxon>
        <taxon>Bacillota</taxon>
        <taxon>Bacilli</taxon>
        <taxon>Bacillales</taxon>
        <taxon>Bacillaceae</taxon>
        <taxon>Bacillus</taxon>
    </lineage>
</organism>
<protein>
    <recommendedName>
        <fullName>Uncharacterized protein YrkK</fullName>
    </recommendedName>
</protein>
<dbReference type="EMBL" id="D84432">
    <property type="protein sequence ID" value="BAA12366.1"/>
    <property type="molecule type" value="Genomic_DNA"/>
</dbReference>
<dbReference type="EMBL" id="AL009126">
    <property type="protein sequence ID" value="CAB14589.2"/>
    <property type="molecule type" value="Genomic_DNA"/>
</dbReference>
<dbReference type="PIR" id="A69977">
    <property type="entry name" value="A69977"/>
</dbReference>
<dbReference type="RefSeq" id="NP_390525.2">
    <property type="nucleotide sequence ID" value="NC_000964.3"/>
</dbReference>
<dbReference type="RefSeq" id="WP_004398792.1">
    <property type="nucleotide sequence ID" value="NZ_OZ025638.1"/>
</dbReference>
<dbReference type="FunCoup" id="P54438">
    <property type="interactions" value="31"/>
</dbReference>
<dbReference type="PaxDb" id="224308-BSU26480"/>
<dbReference type="EnsemblBacteria" id="CAB14589">
    <property type="protein sequence ID" value="CAB14589"/>
    <property type="gene ID" value="BSU_26480"/>
</dbReference>
<dbReference type="GeneID" id="937659"/>
<dbReference type="KEGG" id="bsu:BSU26480"/>
<dbReference type="PATRIC" id="fig|224308.179.peg.2876"/>
<dbReference type="eggNOG" id="ENOG502ZC1H">
    <property type="taxonomic scope" value="Bacteria"/>
</dbReference>
<dbReference type="InParanoid" id="P54438"/>
<dbReference type="OrthoDB" id="2221824at2"/>
<dbReference type="BioCyc" id="BSUB:BSU26480-MONOMER"/>
<dbReference type="Proteomes" id="UP000001570">
    <property type="component" value="Chromosome"/>
</dbReference>
<dbReference type="GO" id="GO:0005886">
    <property type="term" value="C:plasma membrane"/>
    <property type="evidence" value="ECO:0007669"/>
    <property type="project" value="UniProtKB-SubCell"/>
</dbReference>
<dbReference type="InterPro" id="IPR025671">
    <property type="entry name" value="HXXEE"/>
</dbReference>
<dbReference type="Pfam" id="PF13787">
    <property type="entry name" value="HXXEE"/>
    <property type="match status" value="1"/>
</dbReference>
<reference key="1">
    <citation type="journal article" date="1996" name="Microbiology">
        <title>Systematic sequencing of the 283 kb 210 degrees-232 degrees region of the Bacillus subtilis genome containing the skin element and many sporulation genes.</title>
        <authorList>
            <person name="Mizuno M."/>
            <person name="Masuda S."/>
            <person name="Takemaru K."/>
            <person name="Hosono S."/>
            <person name="Sato T."/>
            <person name="Takeuchi M."/>
            <person name="Kobayashi Y."/>
        </authorList>
    </citation>
    <scope>NUCLEOTIDE SEQUENCE [GENOMIC DNA]</scope>
    <source>
        <strain>168 / JH642</strain>
    </source>
</reference>
<reference key="2">
    <citation type="journal article" date="1997" name="Nature">
        <title>The complete genome sequence of the Gram-positive bacterium Bacillus subtilis.</title>
        <authorList>
            <person name="Kunst F."/>
            <person name="Ogasawara N."/>
            <person name="Moszer I."/>
            <person name="Albertini A.M."/>
            <person name="Alloni G."/>
            <person name="Azevedo V."/>
            <person name="Bertero M.G."/>
            <person name="Bessieres P."/>
            <person name="Bolotin A."/>
            <person name="Borchert S."/>
            <person name="Borriss R."/>
            <person name="Boursier L."/>
            <person name="Brans A."/>
            <person name="Braun M."/>
            <person name="Brignell S.C."/>
            <person name="Bron S."/>
            <person name="Brouillet S."/>
            <person name="Bruschi C.V."/>
            <person name="Caldwell B."/>
            <person name="Capuano V."/>
            <person name="Carter N.M."/>
            <person name="Choi S.-K."/>
            <person name="Codani J.-J."/>
            <person name="Connerton I.F."/>
            <person name="Cummings N.J."/>
            <person name="Daniel R.A."/>
            <person name="Denizot F."/>
            <person name="Devine K.M."/>
            <person name="Duesterhoeft A."/>
            <person name="Ehrlich S.D."/>
            <person name="Emmerson P.T."/>
            <person name="Entian K.-D."/>
            <person name="Errington J."/>
            <person name="Fabret C."/>
            <person name="Ferrari E."/>
            <person name="Foulger D."/>
            <person name="Fritz C."/>
            <person name="Fujita M."/>
            <person name="Fujita Y."/>
            <person name="Fuma S."/>
            <person name="Galizzi A."/>
            <person name="Galleron N."/>
            <person name="Ghim S.-Y."/>
            <person name="Glaser P."/>
            <person name="Goffeau A."/>
            <person name="Golightly E.J."/>
            <person name="Grandi G."/>
            <person name="Guiseppi G."/>
            <person name="Guy B.J."/>
            <person name="Haga K."/>
            <person name="Haiech J."/>
            <person name="Harwood C.R."/>
            <person name="Henaut A."/>
            <person name="Hilbert H."/>
            <person name="Holsappel S."/>
            <person name="Hosono S."/>
            <person name="Hullo M.-F."/>
            <person name="Itaya M."/>
            <person name="Jones L.-M."/>
            <person name="Joris B."/>
            <person name="Karamata D."/>
            <person name="Kasahara Y."/>
            <person name="Klaerr-Blanchard M."/>
            <person name="Klein C."/>
            <person name="Kobayashi Y."/>
            <person name="Koetter P."/>
            <person name="Koningstein G."/>
            <person name="Krogh S."/>
            <person name="Kumano M."/>
            <person name="Kurita K."/>
            <person name="Lapidus A."/>
            <person name="Lardinois S."/>
            <person name="Lauber J."/>
            <person name="Lazarevic V."/>
            <person name="Lee S.-M."/>
            <person name="Levine A."/>
            <person name="Liu H."/>
            <person name="Masuda S."/>
            <person name="Mauel C."/>
            <person name="Medigue C."/>
            <person name="Medina N."/>
            <person name="Mellado R.P."/>
            <person name="Mizuno M."/>
            <person name="Moestl D."/>
            <person name="Nakai S."/>
            <person name="Noback M."/>
            <person name="Noone D."/>
            <person name="O'Reilly M."/>
            <person name="Ogawa K."/>
            <person name="Ogiwara A."/>
            <person name="Oudega B."/>
            <person name="Park S.-H."/>
            <person name="Parro V."/>
            <person name="Pohl T.M."/>
            <person name="Portetelle D."/>
            <person name="Porwollik S."/>
            <person name="Prescott A.M."/>
            <person name="Presecan E."/>
            <person name="Pujic P."/>
            <person name="Purnelle B."/>
            <person name="Rapoport G."/>
            <person name="Rey M."/>
            <person name="Reynolds S."/>
            <person name="Rieger M."/>
            <person name="Rivolta C."/>
            <person name="Rocha E."/>
            <person name="Roche B."/>
            <person name="Rose M."/>
            <person name="Sadaie Y."/>
            <person name="Sato T."/>
            <person name="Scanlan E."/>
            <person name="Schleich S."/>
            <person name="Schroeter R."/>
            <person name="Scoffone F."/>
            <person name="Sekiguchi J."/>
            <person name="Sekowska A."/>
            <person name="Seror S.J."/>
            <person name="Serror P."/>
            <person name="Shin B.-S."/>
            <person name="Soldo B."/>
            <person name="Sorokin A."/>
            <person name="Tacconi E."/>
            <person name="Takagi T."/>
            <person name="Takahashi H."/>
            <person name="Takemaru K."/>
            <person name="Takeuchi M."/>
            <person name="Tamakoshi A."/>
            <person name="Tanaka T."/>
            <person name="Terpstra P."/>
            <person name="Tognoni A."/>
            <person name="Tosato V."/>
            <person name="Uchiyama S."/>
            <person name="Vandenbol M."/>
            <person name="Vannier F."/>
            <person name="Vassarotti A."/>
            <person name="Viari A."/>
            <person name="Wambutt R."/>
            <person name="Wedler E."/>
            <person name="Wedler H."/>
            <person name="Weitzenegger T."/>
            <person name="Winters P."/>
            <person name="Wipat A."/>
            <person name="Yamamoto H."/>
            <person name="Yamane K."/>
            <person name="Yasumoto K."/>
            <person name="Yata K."/>
            <person name="Yoshida K."/>
            <person name="Yoshikawa H.-F."/>
            <person name="Zumstein E."/>
            <person name="Yoshikawa H."/>
            <person name="Danchin A."/>
        </authorList>
    </citation>
    <scope>NUCLEOTIDE SEQUENCE [LARGE SCALE GENOMIC DNA]</scope>
    <source>
        <strain>168</strain>
    </source>
</reference>
<reference key="3">
    <citation type="journal article" date="2009" name="Microbiology">
        <title>From a consortium sequence to a unified sequence: the Bacillus subtilis 168 reference genome a decade later.</title>
        <authorList>
            <person name="Barbe V."/>
            <person name="Cruveiller S."/>
            <person name="Kunst F."/>
            <person name="Lenoble P."/>
            <person name="Meurice G."/>
            <person name="Sekowska A."/>
            <person name="Vallenet D."/>
            <person name="Wang T."/>
            <person name="Moszer I."/>
            <person name="Medigue C."/>
            <person name="Danchin A."/>
        </authorList>
    </citation>
    <scope>SEQUENCE REVISION TO 96 AND 102</scope>
</reference>
<comment type="subcellular location">
    <subcellularLocation>
        <location evidence="2">Cell membrane</location>
        <topology evidence="2">Multi-pass membrane protein</topology>
    </subcellularLocation>
</comment>
<sequence>MVYFVAFFCFAITLHNIEEAIWLPEWSQQSSKFQKPVTSNEFHFAVIVITMLAYLSAFGFLYMPESDIAKWIFIGFLGSMVINAIFPHLIATVVMKKYAPGLLTGLLLNIPVNSLVIYQMFLKNLIVWKELIISTLVVGIILLALIPLLFKVGDKVSP</sequence>
<keyword id="KW-1003">Cell membrane</keyword>
<keyword id="KW-0472">Membrane</keyword>
<keyword id="KW-1185">Reference proteome</keyword>
<keyword id="KW-0812">Transmembrane</keyword>
<keyword id="KW-1133">Transmembrane helix</keyword>
<accession>P54438</accession>
<feature type="chain" id="PRO_0000049875" description="Uncharacterized protein YrkK">
    <location>
        <begin position="1"/>
        <end position="158"/>
    </location>
</feature>
<feature type="transmembrane region" description="Helical" evidence="1">
    <location>
        <begin position="42"/>
        <end position="62"/>
    </location>
</feature>
<feature type="transmembrane region" description="Helical" evidence="1">
    <location>
        <begin position="71"/>
        <end position="91"/>
    </location>
</feature>
<feature type="transmembrane region" description="Helical" evidence="1">
    <location>
        <begin position="102"/>
        <end position="122"/>
    </location>
</feature>
<feature type="transmembrane region" description="Helical" evidence="1">
    <location>
        <begin position="130"/>
        <end position="150"/>
    </location>
</feature>
<feature type="sequence conflict" description="In Ref. 1; BAA12366." evidence="2" ref="1">
    <original>K</original>
    <variation>E</variation>
    <location>
        <position position="96"/>
    </location>
</feature>
<feature type="sequence conflict" description="In Ref. 1; BAA12366." evidence="2" ref="1">
    <original>L</original>
    <variation>P</variation>
    <location>
        <position position="102"/>
    </location>
</feature>
<evidence type="ECO:0000255" key="1"/>
<evidence type="ECO:0000305" key="2"/>
<proteinExistence type="predicted"/>
<gene>
    <name type="primary">yrkK</name>
    <name type="ordered locus">BSU26480</name>
</gene>
<name>YRKK_BACSU</name>